<keyword id="KW-0066">ATP synthesis</keyword>
<keyword id="KW-0138">CF(0)</keyword>
<keyword id="KW-0375">Hydrogen ion transport</keyword>
<keyword id="KW-0406">Ion transport</keyword>
<keyword id="KW-0472">Membrane</keyword>
<keyword id="KW-0496">Mitochondrion</keyword>
<keyword id="KW-0691">RNA editing</keyword>
<keyword id="KW-0812">Transmembrane</keyword>
<keyword id="KW-1133">Transmembrane helix</keyword>
<keyword id="KW-0813">Transport</keyword>
<feature type="chain" id="PRO_0000096474" description="ATP synthase protein MI25">
    <location>
        <begin position="1"/>
        <end position="219"/>
    </location>
</feature>
<feature type="transmembrane region" description="Helical" evidence="2">
    <location>
        <begin position="29"/>
        <end position="49"/>
    </location>
</feature>
<geneLocation type="mitochondrion"/>
<dbReference type="EMBL" id="X06667">
    <property type="protein sequence ID" value="CAA29866.1"/>
    <property type="status" value="ALT_SEQ"/>
    <property type="molecule type" value="Genomic_DNA"/>
</dbReference>
<dbReference type="PIR" id="S17948">
    <property type="entry name" value="S17948"/>
</dbReference>
<dbReference type="SMR" id="P09004"/>
<dbReference type="PaxDb" id="4577-GRMZM2G066111_P01"/>
<dbReference type="MaizeGDB" id="69242"/>
<dbReference type="eggNOG" id="KOG4664">
    <property type="taxonomic scope" value="Eukaryota"/>
</dbReference>
<dbReference type="GO" id="GO:0031966">
    <property type="term" value="C:mitochondrial membrane"/>
    <property type="evidence" value="ECO:0007669"/>
    <property type="project" value="UniProtKB-SubCell"/>
</dbReference>
<dbReference type="GO" id="GO:0045259">
    <property type="term" value="C:proton-transporting ATP synthase complex"/>
    <property type="evidence" value="ECO:0007669"/>
    <property type="project" value="UniProtKB-KW"/>
</dbReference>
<dbReference type="GO" id="GO:0015078">
    <property type="term" value="F:proton transmembrane transporter activity"/>
    <property type="evidence" value="ECO:0007669"/>
    <property type="project" value="InterPro"/>
</dbReference>
<dbReference type="GO" id="GO:0015986">
    <property type="term" value="P:proton motive force-driven ATP synthesis"/>
    <property type="evidence" value="ECO:0007669"/>
    <property type="project" value="InterPro"/>
</dbReference>
<dbReference type="InterPro" id="IPR008688">
    <property type="entry name" value="ATP_synth_Bsub_B/MI25"/>
</dbReference>
<dbReference type="InterPro" id="IPR044988">
    <property type="entry name" value="MI25_plants"/>
</dbReference>
<dbReference type="PANTHER" id="PTHR37774:SF4">
    <property type="entry name" value="ATP SYNTHASE PROTEIN MI25"/>
    <property type="match status" value="1"/>
</dbReference>
<dbReference type="PANTHER" id="PTHR37774">
    <property type="entry name" value="ATP SYNTHASE PROTEIN MI25-RELATED"/>
    <property type="match status" value="1"/>
</dbReference>
<dbReference type="Pfam" id="PF05405">
    <property type="entry name" value="Mt_ATP-synt_B"/>
    <property type="match status" value="1"/>
</dbReference>
<comment type="function">
    <text evidence="1">This is one of the chains of the nonenzymatic component (CF(0) subunit) of the mitochondrial ATPase complex.</text>
</comment>
<comment type="subunit">
    <text evidence="1">F-type ATPases have 2 components, CF(1) - the catalytic core - and CF(0) - the membrane proton channel. CF(1) has five subunits: alpha(3), beta(3), gamma(1), delta(1), epsilon(1). CF(0) has three main subunits: a, b and c (By similarity).</text>
</comment>
<comment type="subcellular location">
    <subcellularLocation>
        <location evidence="1">Mitochondrion membrane</location>
        <topology evidence="1">Single-pass membrane protein</topology>
    </subcellularLocation>
</comment>
<comment type="RNA editing">
    <location>
        <position position="50"/>
    </location>
    <location>
        <position position="96"/>
    </location>
</comment>
<comment type="similarity">
    <text evidence="3">Belongs to the ATPase protein MI25 family.</text>
</comment>
<proteinExistence type="evidence at transcript level"/>
<protein>
    <recommendedName>
        <fullName>ATP synthase protein MI25</fullName>
    </recommendedName>
    <alternativeName>
        <fullName>ORF 25</fullName>
    </alternativeName>
</protein>
<sequence>MRFSGMDMKGINMLFAAIPSICASSPKKISIYNEEMIVARCFIGFLILSWKSLGKTFKETLDGRIESIQESLQQFFNPNEVILEESNEQQRLLNLWISLRICSTVKVVESLPAARCAPKCEKTVQALLCRNLNVKSATLLNATSSRRIRLQDDIVTGFHFSVSERLVSGSTTLVEASTVEQIREAFLLEPRDLIREGFIVLRKVRVGGIPGTCGDGVGL</sequence>
<name>MI25_MAIZE</name>
<reference key="1">
    <citation type="journal article" date="1987" name="Curr. Genet.">
        <title>Characterization of the gene urf13-T and an unidentified reading frame, ORF 25, in maize and tobacco mitochondria.</title>
        <authorList>
            <person name="Stamper S.E."/>
            <person name="Dewey R.E."/>
            <person name="Bland M.M."/>
            <person name="Levings C.S. III"/>
        </authorList>
    </citation>
    <scope>NUCLEOTIDE SEQUENCE [GENOMIC DNA]</scope>
    <source>
        <strain>cv. B73</strain>
    </source>
</reference>
<organism>
    <name type="scientific">Zea mays</name>
    <name type="common">Maize</name>
    <dbReference type="NCBI Taxonomy" id="4577"/>
    <lineage>
        <taxon>Eukaryota</taxon>
        <taxon>Viridiplantae</taxon>
        <taxon>Streptophyta</taxon>
        <taxon>Embryophyta</taxon>
        <taxon>Tracheophyta</taxon>
        <taxon>Spermatophyta</taxon>
        <taxon>Magnoliopsida</taxon>
        <taxon>Liliopsida</taxon>
        <taxon>Poales</taxon>
        <taxon>Poaceae</taxon>
        <taxon>PACMAD clade</taxon>
        <taxon>Panicoideae</taxon>
        <taxon>Andropogonodae</taxon>
        <taxon>Andropogoneae</taxon>
        <taxon>Tripsacinae</taxon>
        <taxon>Zea</taxon>
    </lineage>
</organism>
<accession>P09004</accession>
<evidence type="ECO:0000250" key="1"/>
<evidence type="ECO:0000255" key="2"/>
<evidence type="ECO:0000305" key="3"/>